<protein>
    <recommendedName>
        <fullName>Regulatory protein SIR1</fullName>
    </recommendedName>
    <alternativeName>
        <fullName>Heterochromatin protein SIR1</fullName>
    </alternativeName>
    <alternativeName>
        <fullName>Silent information regulator 1</fullName>
    </alternativeName>
</protein>
<dbReference type="EMBL" id="AAFW02000152">
    <property type="protein sequence ID" value="EDN60004.1"/>
    <property type="status" value="ALT_INIT"/>
    <property type="molecule type" value="Genomic_DNA"/>
</dbReference>
<dbReference type="SMR" id="A7A061"/>
<dbReference type="TopDownProteomics" id="A7A061"/>
<dbReference type="HOGENOM" id="CLU_449838_0_0_1"/>
<dbReference type="OrthoDB" id="15529at4893"/>
<dbReference type="Proteomes" id="UP000007060">
    <property type="component" value="Unassembled WGS sequence"/>
</dbReference>
<dbReference type="GO" id="GO:0000775">
    <property type="term" value="C:chromosome, centromeric region"/>
    <property type="evidence" value="ECO:0007669"/>
    <property type="project" value="UniProtKB-SubCell"/>
</dbReference>
<dbReference type="GO" id="GO:0005634">
    <property type="term" value="C:nucleus"/>
    <property type="evidence" value="ECO:0007669"/>
    <property type="project" value="UniProtKB-SubCell"/>
</dbReference>
<dbReference type="InterPro" id="IPR037240">
    <property type="entry name" value="ORC1-binding_dom"/>
</dbReference>
<dbReference type="InterPro" id="IPR021646">
    <property type="entry name" value="Sir1_ORC-binding"/>
</dbReference>
<dbReference type="Pfam" id="PF11603">
    <property type="entry name" value="Sir1"/>
    <property type="match status" value="2"/>
</dbReference>
<dbReference type="SUPFAM" id="SSF144005">
    <property type="entry name" value="ORC1-binding domain"/>
    <property type="match status" value="2"/>
</dbReference>
<name>SIR1_YEAS7</name>
<organism>
    <name type="scientific">Saccharomyces cerevisiae (strain YJM789)</name>
    <name type="common">Baker's yeast</name>
    <dbReference type="NCBI Taxonomy" id="307796"/>
    <lineage>
        <taxon>Eukaryota</taxon>
        <taxon>Fungi</taxon>
        <taxon>Dikarya</taxon>
        <taxon>Ascomycota</taxon>
        <taxon>Saccharomycotina</taxon>
        <taxon>Saccharomycetes</taxon>
        <taxon>Saccharomycetales</taxon>
        <taxon>Saccharomycetaceae</taxon>
        <taxon>Saccharomyces</taxon>
    </lineage>
</organism>
<feature type="chain" id="PRO_0000380180" description="Regulatory protein SIR1">
    <location>
        <begin position="1"/>
        <end position="654"/>
    </location>
</feature>
<feature type="region of interest" description="Sufficient for interaction with SIR4" evidence="1">
    <location>
        <begin position="322"/>
        <end position="654"/>
    </location>
</feature>
<feature type="region of interest" description="ORC interacting region (OIR)" evidence="1">
    <location>
        <begin position="449"/>
        <end position="587"/>
    </location>
</feature>
<accession>A7A061</accession>
<reference key="1">
    <citation type="journal article" date="2007" name="Proc. Natl. Acad. Sci. U.S.A.">
        <title>Genome sequencing and comparative analysis of Saccharomyces cerevisiae strain YJM789.</title>
        <authorList>
            <person name="Wei W."/>
            <person name="McCusker J.H."/>
            <person name="Hyman R.W."/>
            <person name="Jones T."/>
            <person name="Ning Y."/>
            <person name="Cao Z."/>
            <person name="Gu Z."/>
            <person name="Bruno D."/>
            <person name="Miranda M."/>
            <person name="Nguyen M."/>
            <person name="Wilhelmy J."/>
            <person name="Komp C."/>
            <person name="Tamse R."/>
            <person name="Wang X."/>
            <person name="Jia P."/>
            <person name="Luedi P."/>
            <person name="Oefner P.J."/>
            <person name="David L."/>
            <person name="Dietrich F.S."/>
            <person name="Li Y."/>
            <person name="Davis R.W."/>
            <person name="Steinmetz L.M."/>
        </authorList>
    </citation>
    <scope>NUCLEOTIDE SEQUENCE [LARGE SCALE GENOMIC DNA]</scope>
    <source>
        <strain>YJM789</strain>
    </source>
</reference>
<gene>
    <name type="primary">SIR1</name>
    <name type="ORF">SCY_3471</name>
</gene>
<comment type="function">
    <text evidence="1">Involved in the establishment, but not the maintenance, of heterochromatic silencing at the cryptic mating-type loci HMR and HML. Is recruited by interacting with the ORC1 subunit of the origin recognition complex (ORC), which binds to HML-I or HMR-E silencers, DNA elements that direct the formation of silent chromatin at the mating-type loci. Establishes transcriptional silencing by recruiting the three other SIR proteins, SIR2, SIR3, and SIR4, that function directly in silenced chromatin and establish repression. Also found in centromeric chromatin. Binds to and helps retain CAC1, a subunit of chromatin assembly factor I (CAF-I) at centromeric loci independent on the other SIR proteins (By similarity).</text>
</comment>
<comment type="subunit">
    <text evidence="1">Interacts (via OIR domain) with ORC1 (via BAH domain). Interacts with SIR4. Interacts with CAC1.</text>
</comment>
<comment type="subcellular location">
    <subcellularLocation>
        <location evidence="1">Nucleus</location>
    </subcellularLocation>
    <subcellularLocation>
        <location evidence="1">Chromosome</location>
        <location evidence="1">Centromere</location>
    </subcellularLocation>
    <text evidence="1">Associated primarily with the HMR-E silencer at the HMR locus.</text>
</comment>
<comment type="sequence caution" evidence="2">
    <conflict type="erroneous initiation">
        <sequence resource="EMBL-CDS" id="EDN60004"/>
    </conflict>
</comment>
<keyword id="KW-0137">Centromere</keyword>
<keyword id="KW-0158">Chromosome</keyword>
<keyword id="KW-0539">Nucleus</keyword>
<keyword id="KW-0678">Repressor</keyword>
<keyword id="KW-0804">Transcription</keyword>
<keyword id="KW-0805">Transcription regulation</keyword>
<sequence>MLQINSRLAVIDGWLVDTVKRKPINFRSPEVRLLLPNDDDYKKLSQQNLVDWTRLKKDSNSVLVGVKSMELFKHIKLVLREFFLLEDGRIILKRIRSKLRYKVVKKLTCKCCRLNLPKWGTVYIHPMLKDKEKPLAGVCEFSLDVNPDREYPLIEINVSHQYIIIEGFLLYLNERRLYRWNDNNLRSQVGLTKWAHLRKTYNPVSLDILYSLNSNFYFVKDDLLFQLLGKRVFVKFCKVMENGKCGKAPLWYRVKRTTTAKATHIAYAISNSTAPDSFKSKNNDYRFIVREKPIVENTISNLDYSDIKKQQFTEAEVVKRKISADISQIENVHTQFNSQKEKNNIRVNKVSSEVLDQISKFPVSRVTLLLISAGQDKNYIELVEELARRLEKICIEKTTQSLEEIRDTFQANPEMQARFDKEYYQSIEEYKITLELIKEDLLITLIKQMENMWAAEKKFSTEEEYVSPRFLVADGFLIDLAEEKPINPKDPRLLTLLKDHQRAMIDQMNLVKWNDFKKYQDPIPLKAKTLFKFCKQIKKKFLRGADFKLHTLPTEANLKYEPERMTVSCSCVPILLDDQTVQYLYDDSIIPEFEATSSYATKQSKCGGKMSLQMEPDLLFQEAIRRMRHLTAYDVLRRNYIAAFEELYMGNCND</sequence>
<evidence type="ECO:0000250" key="1"/>
<evidence type="ECO:0000305" key="2"/>
<proteinExistence type="inferred from homology"/>